<dbReference type="EC" id="1.8.4.8" evidence="1"/>
<dbReference type="EMBL" id="CP000970">
    <property type="protein sequence ID" value="ACB15991.1"/>
    <property type="molecule type" value="Genomic_DNA"/>
</dbReference>
<dbReference type="RefSeq" id="WP_000039841.1">
    <property type="nucleotide sequence ID" value="NC_010498.1"/>
</dbReference>
<dbReference type="SMR" id="B1LQ85"/>
<dbReference type="KEGG" id="ecm:EcSMS35_2890"/>
<dbReference type="HOGENOM" id="CLU_044089_3_0_6"/>
<dbReference type="UniPathway" id="UPA00140">
    <property type="reaction ID" value="UER00206"/>
</dbReference>
<dbReference type="Proteomes" id="UP000007011">
    <property type="component" value="Chromosome"/>
</dbReference>
<dbReference type="GO" id="GO:0005737">
    <property type="term" value="C:cytoplasm"/>
    <property type="evidence" value="ECO:0007669"/>
    <property type="project" value="UniProtKB-SubCell"/>
</dbReference>
<dbReference type="GO" id="GO:0004604">
    <property type="term" value="F:phosphoadenylyl-sulfate reductase (thioredoxin) activity"/>
    <property type="evidence" value="ECO:0007669"/>
    <property type="project" value="UniProtKB-UniRule"/>
</dbReference>
<dbReference type="GO" id="GO:0070814">
    <property type="term" value="P:hydrogen sulfide biosynthetic process"/>
    <property type="evidence" value="ECO:0007669"/>
    <property type="project" value="UniProtKB-UniRule"/>
</dbReference>
<dbReference type="GO" id="GO:0019379">
    <property type="term" value="P:sulfate assimilation, phosphoadenylyl sulfate reduction by phosphoadenylyl-sulfate reductase (thioredoxin)"/>
    <property type="evidence" value="ECO:0007669"/>
    <property type="project" value="UniProtKB-UniRule"/>
</dbReference>
<dbReference type="CDD" id="cd23945">
    <property type="entry name" value="PAPS_reductase"/>
    <property type="match status" value="1"/>
</dbReference>
<dbReference type="FunFam" id="3.40.50.620:FF:000043">
    <property type="entry name" value="Phosphoadenosine phosphosulfate reductase"/>
    <property type="match status" value="1"/>
</dbReference>
<dbReference type="Gene3D" id="3.40.50.620">
    <property type="entry name" value="HUPs"/>
    <property type="match status" value="1"/>
</dbReference>
<dbReference type="HAMAP" id="MF_00063">
    <property type="entry name" value="CysH"/>
    <property type="match status" value="1"/>
</dbReference>
<dbReference type="InterPro" id="IPR004511">
    <property type="entry name" value="PAPS/APS_Rdtase"/>
</dbReference>
<dbReference type="InterPro" id="IPR002500">
    <property type="entry name" value="PAPS_reduct_dom"/>
</dbReference>
<dbReference type="InterPro" id="IPR011800">
    <property type="entry name" value="PAPS_reductase_CysH"/>
</dbReference>
<dbReference type="InterPro" id="IPR014729">
    <property type="entry name" value="Rossmann-like_a/b/a_fold"/>
</dbReference>
<dbReference type="NCBIfam" id="TIGR00434">
    <property type="entry name" value="cysH"/>
    <property type="match status" value="1"/>
</dbReference>
<dbReference type="NCBIfam" id="TIGR02057">
    <property type="entry name" value="PAPS_reductase"/>
    <property type="match status" value="1"/>
</dbReference>
<dbReference type="NCBIfam" id="NF002537">
    <property type="entry name" value="PRK02090.1"/>
    <property type="match status" value="1"/>
</dbReference>
<dbReference type="PANTHER" id="PTHR46509">
    <property type="entry name" value="PHOSPHOADENOSINE PHOSPHOSULFATE REDUCTASE"/>
    <property type="match status" value="1"/>
</dbReference>
<dbReference type="PANTHER" id="PTHR46509:SF1">
    <property type="entry name" value="PHOSPHOADENOSINE PHOSPHOSULFATE REDUCTASE"/>
    <property type="match status" value="1"/>
</dbReference>
<dbReference type="Pfam" id="PF01507">
    <property type="entry name" value="PAPS_reduct"/>
    <property type="match status" value="1"/>
</dbReference>
<dbReference type="PIRSF" id="PIRSF000857">
    <property type="entry name" value="PAPS_reductase"/>
    <property type="match status" value="1"/>
</dbReference>
<dbReference type="SUPFAM" id="SSF52402">
    <property type="entry name" value="Adenine nucleotide alpha hydrolases-like"/>
    <property type="match status" value="1"/>
</dbReference>
<comment type="function">
    <text evidence="1">Catalyzes the formation of sulfite from phosphoadenosine 5'-phosphosulfate (PAPS) using thioredoxin as an electron donor.</text>
</comment>
<comment type="catalytic activity">
    <reaction evidence="1">
        <text>[thioredoxin]-disulfide + sulfite + adenosine 3',5'-bisphosphate + 2 H(+) = [thioredoxin]-dithiol + 3'-phosphoadenylyl sulfate</text>
        <dbReference type="Rhea" id="RHEA:11724"/>
        <dbReference type="Rhea" id="RHEA-COMP:10698"/>
        <dbReference type="Rhea" id="RHEA-COMP:10700"/>
        <dbReference type="ChEBI" id="CHEBI:15378"/>
        <dbReference type="ChEBI" id="CHEBI:17359"/>
        <dbReference type="ChEBI" id="CHEBI:29950"/>
        <dbReference type="ChEBI" id="CHEBI:50058"/>
        <dbReference type="ChEBI" id="CHEBI:58339"/>
        <dbReference type="ChEBI" id="CHEBI:58343"/>
        <dbReference type="EC" id="1.8.4.8"/>
    </reaction>
</comment>
<comment type="pathway">
    <text evidence="1">Sulfur metabolism; hydrogen sulfide biosynthesis; sulfite from sulfate: step 3/3.</text>
</comment>
<comment type="subcellular location">
    <subcellularLocation>
        <location evidence="1">Cytoplasm</location>
    </subcellularLocation>
</comment>
<comment type="similarity">
    <text evidence="1">Belongs to the PAPS reductase family. CysH subfamily.</text>
</comment>
<gene>
    <name evidence="1" type="primary">cysH</name>
    <name type="ordered locus">EcSMS35_2890</name>
</gene>
<feature type="chain" id="PRO_1000116952" description="Phosphoadenosine 5'-phosphosulfate reductase">
    <location>
        <begin position="1"/>
        <end position="244"/>
    </location>
</feature>
<feature type="active site" description="Nucleophile; cysteine thiosulfonate intermediate" evidence="1">
    <location>
        <position position="239"/>
    </location>
</feature>
<accession>B1LQ85</accession>
<keyword id="KW-0963">Cytoplasm</keyword>
<keyword id="KW-0560">Oxidoreductase</keyword>
<evidence type="ECO:0000255" key="1">
    <source>
        <dbReference type="HAMAP-Rule" id="MF_00063"/>
    </source>
</evidence>
<name>CYSH_ECOSM</name>
<reference key="1">
    <citation type="journal article" date="2008" name="J. Bacteriol.">
        <title>Insights into the environmental resistance gene pool from the genome sequence of the multidrug-resistant environmental isolate Escherichia coli SMS-3-5.</title>
        <authorList>
            <person name="Fricke W.F."/>
            <person name="Wright M.S."/>
            <person name="Lindell A.H."/>
            <person name="Harkins D.M."/>
            <person name="Baker-Austin C."/>
            <person name="Ravel J."/>
            <person name="Stepanauskas R."/>
        </authorList>
    </citation>
    <scope>NUCLEOTIDE SEQUENCE [LARGE SCALE GENOMIC DNA]</scope>
    <source>
        <strain>SMS-3-5 / SECEC</strain>
    </source>
</reference>
<sequence>MSKLDLNALNELPKVDRILALAETNAELEKLDAEGRVAWALDNLPGEYVLSSSFGIQAAVSLHLVNQIHPDIPVILTDTGYLFPETYRFIDELTDKLKLNLKVYRATESAAWQEARYGKLWEQGVEGIEKYNDINKVEPMNRALKELNAQTWFAGLRREQSGSRANLPVLAIQRGVFKVLPIIDWDNRTIYQYLQKHGLKYHPLWDEGYLSVGDTHTTRKWEPGMAEEETRFFGLKRECGLHEG</sequence>
<organism>
    <name type="scientific">Escherichia coli (strain SMS-3-5 / SECEC)</name>
    <dbReference type="NCBI Taxonomy" id="439855"/>
    <lineage>
        <taxon>Bacteria</taxon>
        <taxon>Pseudomonadati</taxon>
        <taxon>Pseudomonadota</taxon>
        <taxon>Gammaproteobacteria</taxon>
        <taxon>Enterobacterales</taxon>
        <taxon>Enterobacteriaceae</taxon>
        <taxon>Escherichia</taxon>
    </lineage>
</organism>
<protein>
    <recommendedName>
        <fullName evidence="1">Phosphoadenosine 5'-phosphosulfate reductase</fullName>
        <shortName evidence="1">PAPS reductase</shortName>
        <ecNumber evidence="1">1.8.4.8</ecNumber>
    </recommendedName>
    <alternativeName>
        <fullName evidence="1">3'-phosphoadenylylsulfate reductase</fullName>
    </alternativeName>
    <alternativeName>
        <fullName evidence="1">PAPS reductase, thioredoxin dependent</fullName>
    </alternativeName>
    <alternativeName>
        <fullName evidence="1">PAPS sulfotransferase</fullName>
    </alternativeName>
    <alternativeName>
        <fullName evidence="1">PAdoPS reductase</fullName>
    </alternativeName>
</protein>
<proteinExistence type="inferred from homology"/>